<sequence length="134" mass="14110">MAKAPNNAAAARVRKKVKKNVAEGIAHVHASFNNTIITITDRQGNALSWATSGGAGFKGSRKSTPFAAQVAAEAAGKVAIECGIKNLEVRIKGPGPGRESAVRALNNLGIKITQIQDVTPVPHNGCRPPKRRRI</sequence>
<organism>
    <name type="scientific">Janthinobacterium sp. (strain Marseille)</name>
    <name type="common">Minibacterium massiliensis</name>
    <dbReference type="NCBI Taxonomy" id="375286"/>
    <lineage>
        <taxon>Bacteria</taxon>
        <taxon>Pseudomonadati</taxon>
        <taxon>Pseudomonadota</taxon>
        <taxon>Betaproteobacteria</taxon>
        <taxon>Burkholderiales</taxon>
        <taxon>Oxalobacteraceae</taxon>
        <taxon>Janthinobacterium</taxon>
    </lineage>
</organism>
<feature type="chain" id="PRO_1000051837" description="Small ribosomal subunit protein uS11">
    <location>
        <begin position="1"/>
        <end position="134"/>
    </location>
</feature>
<comment type="function">
    <text evidence="1">Located on the platform of the 30S subunit, it bridges several disparate RNA helices of the 16S rRNA. Forms part of the Shine-Dalgarno cleft in the 70S ribosome.</text>
</comment>
<comment type="subunit">
    <text evidence="1">Part of the 30S ribosomal subunit. Interacts with proteins S7 and S18. Binds to IF-3.</text>
</comment>
<comment type="similarity">
    <text evidence="1">Belongs to the universal ribosomal protein uS11 family.</text>
</comment>
<protein>
    <recommendedName>
        <fullName evidence="1">Small ribosomal subunit protein uS11</fullName>
    </recommendedName>
    <alternativeName>
        <fullName evidence="2">30S ribosomal protein S11</fullName>
    </alternativeName>
</protein>
<accession>A6T3I0</accession>
<name>RS11_JANMA</name>
<evidence type="ECO:0000255" key="1">
    <source>
        <dbReference type="HAMAP-Rule" id="MF_01310"/>
    </source>
</evidence>
<evidence type="ECO:0000305" key="2"/>
<keyword id="KW-0687">Ribonucleoprotein</keyword>
<keyword id="KW-0689">Ribosomal protein</keyword>
<keyword id="KW-0694">RNA-binding</keyword>
<keyword id="KW-0699">rRNA-binding</keyword>
<proteinExistence type="inferred from homology"/>
<reference key="1">
    <citation type="journal article" date="2007" name="PLoS Genet.">
        <title>Genome analysis of Minibacterium massiliensis highlights the convergent evolution of water-living bacteria.</title>
        <authorList>
            <person name="Audic S."/>
            <person name="Robert C."/>
            <person name="Campagna B."/>
            <person name="Parinello H."/>
            <person name="Claverie J.-M."/>
            <person name="Raoult D."/>
            <person name="Drancourt M."/>
        </authorList>
    </citation>
    <scope>NUCLEOTIDE SEQUENCE [LARGE SCALE GENOMIC DNA]</scope>
    <source>
        <strain>Marseille</strain>
    </source>
</reference>
<gene>
    <name evidence="1" type="primary">rpsK</name>
    <name type="ordered locus">mma_3387</name>
</gene>
<dbReference type="EMBL" id="CP000269">
    <property type="protein sequence ID" value="ABR88693.1"/>
    <property type="molecule type" value="Genomic_DNA"/>
</dbReference>
<dbReference type="RefSeq" id="WP_007875349.1">
    <property type="nucleotide sequence ID" value="NC_009659.1"/>
</dbReference>
<dbReference type="SMR" id="A6T3I0"/>
<dbReference type="STRING" id="375286.mma_3387"/>
<dbReference type="KEGG" id="mms:mma_3387"/>
<dbReference type="eggNOG" id="COG0100">
    <property type="taxonomic scope" value="Bacteria"/>
</dbReference>
<dbReference type="HOGENOM" id="CLU_072439_5_0_4"/>
<dbReference type="OrthoDB" id="9806415at2"/>
<dbReference type="Proteomes" id="UP000006388">
    <property type="component" value="Chromosome"/>
</dbReference>
<dbReference type="GO" id="GO:1990904">
    <property type="term" value="C:ribonucleoprotein complex"/>
    <property type="evidence" value="ECO:0007669"/>
    <property type="project" value="UniProtKB-KW"/>
</dbReference>
<dbReference type="GO" id="GO:0005840">
    <property type="term" value="C:ribosome"/>
    <property type="evidence" value="ECO:0007669"/>
    <property type="project" value="UniProtKB-KW"/>
</dbReference>
<dbReference type="GO" id="GO:0019843">
    <property type="term" value="F:rRNA binding"/>
    <property type="evidence" value="ECO:0007669"/>
    <property type="project" value="UniProtKB-UniRule"/>
</dbReference>
<dbReference type="GO" id="GO:0003735">
    <property type="term" value="F:structural constituent of ribosome"/>
    <property type="evidence" value="ECO:0007669"/>
    <property type="project" value="InterPro"/>
</dbReference>
<dbReference type="GO" id="GO:0006412">
    <property type="term" value="P:translation"/>
    <property type="evidence" value="ECO:0007669"/>
    <property type="project" value="UniProtKB-UniRule"/>
</dbReference>
<dbReference type="FunFam" id="3.30.420.80:FF:000001">
    <property type="entry name" value="30S ribosomal protein S11"/>
    <property type="match status" value="1"/>
</dbReference>
<dbReference type="Gene3D" id="3.30.420.80">
    <property type="entry name" value="Ribosomal protein S11"/>
    <property type="match status" value="1"/>
</dbReference>
<dbReference type="HAMAP" id="MF_01310">
    <property type="entry name" value="Ribosomal_uS11"/>
    <property type="match status" value="1"/>
</dbReference>
<dbReference type="InterPro" id="IPR001971">
    <property type="entry name" value="Ribosomal_uS11"/>
</dbReference>
<dbReference type="InterPro" id="IPR019981">
    <property type="entry name" value="Ribosomal_uS11_bac-type"/>
</dbReference>
<dbReference type="InterPro" id="IPR018102">
    <property type="entry name" value="Ribosomal_uS11_CS"/>
</dbReference>
<dbReference type="InterPro" id="IPR036967">
    <property type="entry name" value="Ribosomal_uS11_sf"/>
</dbReference>
<dbReference type="NCBIfam" id="NF003698">
    <property type="entry name" value="PRK05309.1"/>
    <property type="match status" value="1"/>
</dbReference>
<dbReference type="NCBIfam" id="TIGR03632">
    <property type="entry name" value="uS11_bact"/>
    <property type="match status" value="1"/>
</dbReference>
<dbReference type="PANTHER" id="PTHR11759">
    <property type="entry name" value="40S RIBOSOMAL PROTEIN S14/30S RIBOSOMAL PROTEIN S11"/>
    <property type="match status" value="1"/>
</dbReference>
<dbReference type="Pfam" id="PF00411">
    <property type="entry name" value="Ribosomal_S11"/>
    <property type="match status" value="1"/>
</dbReference>
<dbReference type="PIRSF" id="PIRSF002131">
    <property type="entry name" value="Ribosomal_S11"/>
    <property type="match status" value="1"/>
</dbReference>
<dbReference type="SUPFAM" id="SSF53137">
    <property type="entry name" value="Translational machinery components"/>
    <property type="match status" value="1"/>
</dbReference>
<dbReference type="PROSITE" id="PS00054">
    <property type="entry name" value="RIBOSOMAL_S11"/>
    <property type="match status" value="1"/>
</dbReference>